<accession>A5FPX2</accession>
<sequence>MTNEVRVRYAPSPTGYPHLGNIRTAMFNWLFARHNGGKFIVRIEDTDRERYVEGAVESILESLNWLGLDWDEGPDKGGDYGPYYQSERLPLYRKAAEKLVAEGKAYYCHCSSEKLDKMREDQIARKEPPGYDRCCRDRGLGQKEGAVIRFKIPLDGQTAFTDLIRGEVTFDNAKQDDFVILKSDGFPTYHLASVVDDHAMQISHVLRAEEWLPSTPKHLMLYKALGYTPPLYAHLPMILGPDRSKLSKRHGATSTIEYKQAGYLPETMVNFLSLLGWAYDDKTELFSREQLIEYFCLEKVSKTAAIFNYEKLDWMNGMYIRTLSAQDLACRAMPFLEKDARIAASGHLNLDYTVKVMPLIQERAKKLNELAELCWFIYSDDISYDPALLIDKKLTKETSLSALKAANARLEALPNFDAASMEEHIRPLAAELELKPGQLFGMLRTASTGQQVAPPLFQTMEVLGRQRCLGRIAMAIARLSEMPSQRS</sequence>
<organism>
    <name type="scientific">Dehalococcoides mccartyi (strain ATCC BAA-2100 / JCM 16839 / KCTC 5957 / BAV1)</name>
    <dbReference type="NCBI Taxonomy" id="216389"/>
    <lineage>
        <taxon>Bacteria</taxon>
        <taxon>Bacillati</taxon>
        <taxon>Chloroflexota</taxon>
        <taxon>Dehalococcoidia</taxon>
        <taxon>Dehalococcoidales</taxon>
        <taxon>Dehalococcoidaceae</taxon>
        <taxon>Dehalococcoides</taxon>
    </lineage>
</organism>
<gene>
    <name evidence="1" type="primary">gltX</name>
    <name type="ordered locus">DehaBAV1_1176</name>
</gene>
<reference key="1">
    <citation type="submission" date="2007-05" db="EMBL/GenBank/DDBJ databases">
        <title>Complete sequence of Dehalococcoides sp. BAV1.</title>
        <authorList>
            <consortium name="US DOE Joint Genome Institute"/>
            <person name="Copeland A."/>
            <person name="Lucas S."/>
            <person name="Lapidus A."/>
            <person name="Barry K."/>
            <person name="Detter J.C."/>
            <person name="Glavina del Rio T."/>
            <person name="Hammon N."/>
            <person name="Israni S."/>
            <person name="Pitluck S."/>
            <person name="Lowry S."/>
            <person name="Clum A."/>
            <person name="Schmutz J."/>
            <person name="Larimer F."/>
            <person name="Land M."/>
            <person name="Hauser L."/>
            <person name="Kyrpides N."/>
            <person name="Kim E."/>
            <person name="Ritalahti K.M."/>
            <person name="Loeffler F."/>
            <person name="Richardson P."/>
        </authorList>
    </citation>
    <scope>NUCLEOTIDE SEQUENCE [LARGE SCALE GENOMIC DNA]</scope>
    <source>
        <strain>ATCC BAA-2100 / JCM 16839 / KCTC 5957 / BAV1</strain>
    </source>
</reference>
<proteinExistence type="inferred from homology"/>
<evidence type="ECO:0000255" key="1">
    <source>
        <dbReference type="HAMAP-Rule" id="MF_00022"/>
    </source>
</evidence>
<feature type="chain" id="PRO_1000074319" description="Glutamate--tRNA ligase">
    <location>
        <begin position="1"/>
        <end position="487"/>
    </location>
</feature>
<feature type="short sequence motif" description="'HIGH' region" evidence="1">
    <location>
        <begin position="11"/>
        <end position="21"/>
    </location>
</feature>
<feature type="short sequence motif" description="'KMSKS' region" evidence="1">
    <location>
        <begin position="245"/>
        <end position="249"/>
    </location>
</feature>
<feature type="binding site" evidence="1">
    <location>
        <position position="108"/>
    </location>
    <ligand>
        <name>Zn(2+)</name>
        <dbReference type="ChEBI" id="CHEBI:29105"/>
    </ligand>
</feature>
<feature type="binding site" evidence="1">
    <location>
        <position position="110"/>
    </location>
    <ligand>
        <name>Zn(2+)</name>
        <dbReference type="ChEBI" id="CHEBI:29105"/>
    </ligand>
</feature>
<feature type="binding site" evidence="1">
    <location>
        <position position="135"/>
    </location>
    <ligand>
        <name>Zn(2+)</name>
        <dbReference type="ChEBI" id="CHEBI:29105"/>
    </ligand>
</feature>
<feature type="binding site" evidence="1">
    <location>
        <position position="137"/>
    </location>
    <ligand>
        <name>Zn(2+)</name>
        <dbReference type="ChEBI" id="CHEBI:29105"/>
    </ligand>
</feature>
<feature type="binding site" evidence="1">
    <location>
        <position position="248"/>
    </location>
    <ligand>
        <name>ATP</name>
        <dbReference type="ChEBI" id="CHEBI:30616"/>
    </ligand>
</feature>
<comment type="function">
    <text evidence="1">Catalyzes the attachment of glutamate to tRNA(Glu) in a two-step reaction: glutamate is first activated by ATP to form Glu-AMP and then transferred to the acceptor end of tRNA(Glu).</text>
</comment>
<comment type="catalytic activity">
    <reaction evidence="1">
        <text>tRNA(Glu) + L-glutamate + ATP = L-glutamyl-tRNA(Glu) + AMP + diphosphate</text>
        <dbReference type="Rhea" id="RHEA:23540"/>
        <dbReference type="Rhea" id="RHEA-COMP:9663"/>
        <dbReference type="Rhea" id="RHEA-COMP:9680"/>
        <dbReference type="ChEBI" id="CHEBI:29985"/>
        <dbReference type="ChEBI" id="CHEBI:30616"/>
        <dbReference type="ChEBI" id="CHEBI:33019"/>
        <dbReference type="ChEBI" id="CHEBI:78442"/>
        <dbReference type="ChEBI" id="CHEBI:78520"/>
        <dbReference type="ChEBI" id="CHEBI:456215"/>
        <dbReference type="EC" id="6.1.1.17"/>
    </reaction>
</comment>
<comment type="cofactor">
    <cofactor evidence="1">
        <name>Zn(2+)</name>
        <dbReference type="ChEBI" id="CHEBI:29105"/>
    </cofactor>
    <text evidence="1">Binds 1 zinc ion per subunit.</text>
</comment>
<comment type="subunit">
    <text evidence="1">Monomer.</text>
</comment>
<comment type="subcellular location">
    <subcellularLocation>
        <location evidence="1">Cytoplasm</location>
    </subcellularLocation>
</comment>
<comment type="similarity">
    <text evidence="1">Belongs to the class-I aminoacyl-tRNA synthetase family. Glutamate--tRNA ligase type 1 subfamily.</text>
</comment>
<name>SYE_DEHMB</name>
<protein>
    <recommendedName>
        <fullName evidence="1">Glutamate--tRNA ligase</fullName>
        <ecNumber evidence="1">6.1.1.17</ecNumber>
    </recommendedName>
    <alternativeName>
        <fullName evidence="1">Glutamyl-tRNA synthetase</fullName>
        <shortName evidence="1">GluRS</shortName>
    </alternativeName>
</protein>
<keyword id="KW-0030">Aminoacyl-tRNA synthetase</keyword>
<keyword id="KW-0067">ATP-binding</keyword>
<keyword id="KW-0963">Cytoplasm</keyword>
<keyword id="KW-0436">Ligase</keyword>
<keyword id="KW-0479">Metal-binding</keyword>
<keyword id="KW-0547">Nucleotide-binding</keyword>
<keyword id="KW-0648">Protein biosynthesis</keyword>
<keyword id="KW-0862">Zinc</keyword>
<dbReference type="EC" id="6.1.1.17" evidence="1"/>
<dbReference type="EMBL" id="CP000688">
    <property type="protein sequence ID" value="ABQ17755.1"/>
    <property type="molecule type" value="Genomic_DNA"/>
</dbReference>
<dbReference type="SMR" id="A5FPX2"/>
<dbReference type="KEGG" id="deb:DehaBAV1_1176"/>
<dbReference type="PATRIC" id="fig|216389.18.peg.1239"/>
<dbReference type="HOGENOM" id="CLU_015768_6_3_0"/>
<dbReference type="GO" id="GO:0005829">
    <property type="term" value="C:cytosol"/>
    <property type="evidence" value="ECO:0007669"/>
    <property type="project" value="TreeGrafter"/>
</dbReference>
<dbReference type="GO" id="GO:0005524">
    <property type="term" value="F:ATP binding"/>
    <property type="evidence" value="ECO:0007669"/>
    <property type="project" value="UniProtKB-UniRule"/>
</dbReference>
<dbReference type="GO" id="GO:0004818">
    <property type="term" value="F:glutamate-tRNA ligase activity"/>
    <property type="evidence" value="ECO:0007669"/>
    <property type="project" value="UniProtKB-UniRule"/>
</dbReference>
<dbReference type="GO" id="GO:0000049">
    <property type="term" value="F:tRNA binding"/>
    <property type="evidence" value="ECO:0007669"/>
    <property type="project" value="InterPro"/>
</dbReference>
<dbReference type="GO" id="GO:0008270">
    <property type="term" value="F:zinc ion binding"/>
    <property type="evidence" value="ECO:0007669"/>
    <property type="project" value="UniProtKB-UniRule"/>
</dbReference>
<dbReference type="GO" id="GO:0006424">
    <property type="term" value="P:glutamyl-tRNA aminoacylation"/>
    <property type="evidence" value="ECO:0007669"/>
    <property type="project" value="UniProtKB-UniRule"/>
</dbReference>
<dbReference type="CDD" id="cd00808">
    <property type="entry name" value="GluRS_core"/>
    <property type="match status" value="1"/>
</dbReference>
<dbReference type="FunFam" id="3.40.50.620:FF:000045">
    <property type="entry name" value="Glutamate--tRNA ligase, mitochondrial"/>
    <property type="match status" value="1"/>
</dbReference>
<dbReference type="Gene3D" id="1.10.10.350">
    <property type="match status" value="1"/>
</dbReference>
<dbReference type="Gene3D" id="3.40.50.620">
    <property type="entry name" value="HUPs"/>
    <property type="match status" value="1"/>
</dbReference>
<dbReference type="HAMAP" id="MF_00022">
    <property type="entry name" value="Glu_tRNA_synth_type1"/>
    <property type="match status" value="1"/>
</dbReference>
<dbReference type="InterPro" id="IPR045462">
    <property type="entry name" value="aa-tRNA-synth_I_cd-bd"/>
</dbReference>
<dbReference type="InterPro" id="IPR020751">
    <property type="entry name" value="aa-tRNA-synth_I_codon-bd_sub2"/>
</dbReference>
<dbReference type="InterPro" id="IPR001412">
    <property type="entry name" value="aa-tRNA-synth_I_CS"/>
</dbReference>
<dbReference type="InterPro" id="IPR008925">
    <property type="entry name" value="aa_tRNA-synth_I_cd-bd_sf"/>
</dbReference>
<dbReference type="InterPro" id="IPR004527">
    <property type="entry name" value="Glu-tRNA-ligase_bac/mito"/>
</dbReference>
<dbReference type="InterPro" id="IPR000924">
    <property type="entry name" value="Glu/Gln-tRNA-synth"/>
</dbReference>
<dbReference type="InterPro" id="IPR020058">
    <property type="entry name" value="Glu/Gln-tRNA-synth_Ib_cat-dom"/>
</dbReference>
<dbReference type="InterPro" id="IPR049940">
    <property type="entry name" value="GluQ/Sye"/>
</dbReference>
<dbReference type="InterPro" id="IPR033910">
    <property type="entry name" value="GluRS_core"/>
</dbReference>
<dbReference type="InterPro" id="IPR014729">
    <property type="entry name" value="Rossmann-like_a/b/a_fold"/>
</dbReference>
<dbReference type="NCBIfam" id="TIGR00464">
    <property type="entry name" value="gltX_bact"/>
    <property type="match status" value="1"/>
</dbReference>
<dbReference type="PANTHER" id="PTHR43311">
    <property type="entry name" value="GLUTAMATE--TRNA LIGASE"/>
    <property type="match status" value="1"/>
</dbReference>
<dbReference type="PANTHER" id="PTHR43311:SF2">
    <property type="entry name" value="GLUTAMATE--TRNA LIGASE, MITOCHONDRIAL-RELATED"/>
    <property type="match status" value="1"/>
</dbReference>
<dbReference type="Pfam" id="PF19269">
    <property type="entry name" value="Anticodon_2"/>
    <property type="match status" value="1"/>
</dbReference>
<dbReference type="Pfam" id="PF00749">
    <property type="entry name" value="tRNA-synt_1c"/>
    <property type="match status" value="1"/>
</dbReference>
<dbReference type="PRINTS" id="PR00987">
    <property type="entry name" value="TRNASYNTHGLU"/>
</dbReference>
<dbReference type="SUPFAM" id="SSF48163">
    <property type="entry name" value="An anticodon-binding domain of class I aminoacyl-tRNA synthetases"/>
    <property type="match status" value="1"/>
</dbReference>
<dbReference type="SUPFAM" id="SSF52374">
    <property type="entry name" value="Nucleotidylyl transferase"/>
    <property type="match status" value="1"/>
</dbReference>
<dbReference type="PROSITE" id="PS00178">
    <property type="entry name" value="AA_TRNA_LIGASE_I"/>
    <property type="match status" value="1"/>
</dbReference>